<organism>
    <name type="scientific">Xenopus laevis</name>
    <name type="common">African clawed frog</name>
    <dbReference type="NCBI Taxonomy" id="8355"/>
    <lineage>
        <taxon>Eukaryota</taxon>
        <taxon>Metazoa</taxon>
        <taxon>Chordata</taxon>
        <taxon>Craniata</taxon>
        <taxon>Vertebrata</taxon>
        <taxon>Euteleostomi</taxon>
        <taxon>Amphibia</taxon>
        <taxon>Batrachia</taxon>
        <taxon>Anura</taxon>
        <taxon>Pipoidea</taxon>
        <taxon>Pipidae</taxon>
        <taxon>Xenopodinae</taxon>
        <taxon>Xenopus</taxon>
        <taxon>Xenopus</taxon>
    </lineage>
</organism>
<evidence type="ECO:0000250" key="1">
    <source>
        <dbReference type="UniProtKB" id="P02795"/>
    </source>
</evidence>
<evidence type="ECO:0000269" key="2">
    <source>
    </source>
</evidence>
<evidence type="ECO:0000305" key="3"/>
<accession>Q05890</accession>
<accession>Q58ES6</accession>
<sequence length="62" mass="6403">MDPQDCKCETGASCSCGTTCSCSNCKCTSCKKSCCSCCPAECSKCSQGCHCEKGSKKCSCCN</sequence>
<feature type="chain" id="PRO_0000197321" description="Metallothionein">
    <location>
        <begin position="1"/>
        <end position="62"/>
    </location>
</feature>
<feature type="region of interest" description="Beta">
    <location>
        <begin position="1"/>
        <end position="30"/>
    </location>
</feature>
<feature type="region of interest" description="Alpha">
    <location>
        <begin position="31"/>
        <end position="62"/>
    </location>
</feature>
<feature type="binding site" evidence="1">
    <location>
        <position position="6"/>
    </location>
    <ligand>
        <name>a divalent metal cation</name>
        <dbReference type="ChEBI" id="CHEBI:60240"/>
        <label>1</label>
        <note>in cluster B</note>
    </ligand>
</feature>
<feature type="binding site" evidence="1">
    <location>
        <position position="8"/>
    </location>
    <ligand>
        <name>a divalent metal cation</name>
        <dbReference type="ChEBI" id="CHEBI:60240"/>
        <label>1</label>
        <note>in cluster B</note>
    </ligand>
</feature>
<feature type="binding site" evidence="1">
    <location>
        <position position="8"/>
    </location>
    <ligand>
        <name>a divalent metal cation</name>
        <dbReference type="ChEBI" id="CHEBI:60240"/>
        <label>2</label>
        <note>in cluster B</note>
    </ligand>
</feature>
<feature type="binding site" evidence="1">
    <location>
        <position position="14"/>
    </location>
    <ligand>
        <name>a divalent metal cation</name>
        <dbReference type="ChEBI" id="CHEBI:60240"/>
        <label>2</label>
        <note>in cluster B</note>
    </ligand>
</feature>
<feature type="binding site" evidence="1">
    <location>
        <position position="16"/>
    </location>
    <ligand>
        <name>a divalent metal cation</name>
        <dbReference type="ChEBI" id="CHEBI:60240"/>
        <label>2</label>
        <note>in cluster B</note>
    </ligand>
</feature>
<feature type="binding site" evidence="1">
    <location>
        <position position="16"/>
    </location>
    <ligand>
        <name>a divalent metal cation</name>
        <dbReference type="ChEBI" id="CHEBI:60240"/>
        <label>3</label>
        <note>in cluster B</note>
    </ligand>
</feature>
<feature type="binding site" evidence="1">
    <location>
        <position position="20"/>
    </location>
    <ligand>
        <name>a divalent metal cation</name>
        <dbReference type="ChEBI" id="CHEBI:60240"/>
        <label>3</label>
        <note>in cluster B</note>
    </ligand>
</feature>
<feature type="binding site" evidence="1">
    <location>
        <position position="22"/>
    </location>
    <ligand>
        <name>a divalent metal cation</name>
        <dbReference type="ChEBI" id="CHEBI:60240"/>
        <label>1</label>
        <note>in cluster B</note>
    </ligand>
</feature>
<feature type="binding site" evidence="1">
    <location>
        <position position="25"/>
    </location>
    <ligand>
        <name>a divalent metal cation</name>
        <dbReference type="ChEBI" id="CHEBI:60240"/>
        <label>1</label>
        <note>in cluster B</note>
    </ligand>
</feature>
<feature type="binding site" evidence="1">
    <location>
        <position position="25"/>
    </location>
    <ligand>
        <name>a divalent metal cation</name>
        <dbReference type="ChEBI" id="CHEBI:60240"/>
        <label>3</label>
        <note>in cluster B</note>
    </ligand>
</feature>
<feature type="binding site" evidence="1">
    <location>
        <position position="27"/>
    </location>
    <ligand>
        <name>a divalent metal cation</name>
        <dbReference type="ChEBI" id="CHEBI:60240"/>
        <label>2</label>
        <note>in cluster B</note>
    </ligand>
</feature>
<feature type="binding site" evidence="1">
    <location>
        <position position="30"/>
    </location>
    <ligand>
        <name>a divalent metal cation</name>
        <dbReference type="ChEBI" id="CHEBI:60240"/>
        <label>3</label>
        <note>in cluster B</note>
    </ligand>
</feature>
<feature type="binding site" evidence="1">
    <location>
        <position position="34"/>
    </location>
    <ligand>
        <name>a divalent metal cation</name>
        <dbReference type="ChEBI" id="CHEBI:60240"/>
        <label>4</label>
        <note>in cluster A</note>
    </ligand>
</feature>
<feature type="binding site" evidence="1">
    <location>
        <position position="35"/>
    </location>
    <ligand>
        <name>a divalent metal cation</name>
        <dbReference type="ChEBI" id="CHEBI:60240"/>
        <label>4</label>
        <note>in cluster A</note>
    </ligand>
</feature>
<feature type="binding site" evidence="1">
    <location>
        <position position="35"/>
    </location>
    <ligand>
        <name>a divalent metal cation</name>
        <dbReference type="ChEBI" id="CHEBI:60240"/>
        <label>5</label>
        <note>in cluster A</note>
    </ligand>
</feature>
<feature type="binding site" evidence="1">
    <location>
        <position position="37"/>
    </location>
    <ligand>
        <name>a divalent metal cation</name>
        <dbReference type="ChEBI" id="CHEBI:60240"/>
        <label>5</label>
        <note>in cluster A</note>
    </ligand>
</feature>
<feature type="binding site" evidence="1">
    <location>
        <position position="38"/>
    </location>
    <ligand>
        <name>a divalent metal cation</name>
        <dbReference type="ChEBI" id="CHEBI:60240"/>
        <label>5</label>
        <note>in cluster A</note>
    </ligand>
</feature>
<feature type="binding site" evidence="1">
    <location>
        <position position="38"/>
    </location>
    <ligand>
        <name>a divalent metal cation</name>
        <dbReference type="ChEBI" id="CHEBI:60240"/>
        <label>6</label>
        <note>in cluster A</note>
    </ligand>
</feature>
<feature type="binding site" evidence="1">
    <location>
        <position position="42"/>
    </location>
    <ligand>
        <name>a divalent metal cation</name>
        <dbReference type="ChEBI" id="CHEBI:60240"/>
        <label>6</label>
        <note>in cluster A</note>
    </ligand>
</feature>
<feature type="binding site" evidence="1">
    <location>
        <position position="45"/>
    </location>
    <ligand>
        <name>a divalent metal cation</name>
        <dbReference type="ChEBI" id="CHEBI:60240"/>
        <label>4</label>
        <note>in cluster A</note>
    </ligand>
</feature>
<feature type="binding site" evidence="1">
    <location>
        <position position="45"/>
    </location>
    <ligand>
        <name>a divalent metal cation</name>
        <dbReference type="ChEBI" id="CHEBI:60240"/>
        <label>6</label>
        <note>in cluster A</note>
    </ligand>
</feature>
<feature type="binding site" evidence="1">
    <location>
        <position position="49"/>
    </location>
    <ligand>
        <name>a divalent metal cation</name>
        <dbReference type="ChEBI" id="CHEBI:60240"/>
        <label>4</label>
        <note>in cluster A</note>
    </ligand>
</feature>
<feature type="binding site" evidence="1">
    <location>
        <position position="51"/>
    </location>
    <ligand>
        <name>a divalent metal cation</name>
        <dbReference type="ChEBI" id="CHEBI:60240"/>
        <label>5</label>
        <note>in cluster A</note>
    </ligand>
</feature>
<feature type="binding site" evidence="1">
    <location>
        <position position="51"/>
    </location>
    <ligand>
        <name>a divalent metal cation</name>
        <dbReference type="ChEBI" id="CHEBI:60240"/>
        <label>7</label>
        <note>in cluster A</note>
    </ligand>
</feature>
<feature type="binding site" evidence="1">
    <location>
        <position position="58"/>
    </location>
    <ligand>
        <name>a divalent metal cation</name>
        <dbReference type="ChEBI" id="CHEBI:60240"/>
        <label>7</label>
        <note>in cluster A</note>
    </ligand>
</feature>
<feature type="binding site" evidence="1">
    <location>
        <position position="60"/>
    </location>
    <ligand>
        <name>a divalent metal cation</name>
        <dbReference type="ChEBI" id="CHEBI:60240"/>
        <label>7</label>
        <note>in cluster A</note>
    </ligand>
</feature>
<feature type="binding site" evidence="1">
    <location>
        <position position="61"/>
    </location>
    <ligand>
        <name>a divalent metal cation</name>
        <dbReference type="ChEBI" id="CHEBI:60240"/>
        <label>6</label>
        <note>in cluster A</note>
    </ligand>
</feature>
<feature type="binding site" evidence="1">
    <location>
        <position position="61"/>
    </location>
    <ligand>
        <name>a divalent metal cation</name>
        <dbReference type="ChEBI" id="CHEBI:60240"/>
        <label>7</label>
        <note>in cluster A</note>
    </ligand>
</feature>
<feature type="modified residue" description="N-acetylmethionine" evidence="2">
    <location>
        <position position="1"/>
    </location>
</feature>
<gene>
    <name type="primary">mt-a</name>
</gene>
<dbReference type="EMBL" id="M96729">
    <property type="protein sequence ID" value="AAB59949.1"/>
    <property type="molecule type" value="mRNA"/>
</dbReference>
<dbReference type="EMBL" id="X69380">
    <property type="protein sequence ID" value="CAA49177.1"/>
    <property type="molecule type" value="mRNA"/>
</dbReference>
<dbReference type="EMBL" id="U14649">
    <property type="protein sequence ID" value="AAB60616.1"/>
    <property type="molecule type" value="Genomic_DNA"/>
</dbReference>
<dbReference type="EMBL" id="BC091777">
    <property type="protein sequence ID" value="AAH91777.1"/>
    <property type="molecule type" value="mRNA"/>
</dbReference>
<dbReference type="PIR" id="I51538">
    <property type="entry name" value="I51538"/>
</dbReference>
<dbReference type="RefSeq" id="NP_001081042.1">
    <property type="nucleotide sequence ID" value="NM_001087573.1"/>
</dbReference>
<dbReference type="SMR" id="Q05890"/>
<dbReference type="iPTMnet" id="Q05890"/>
<dbReference type="DNASU" id="394349"/>
<dbReference type="GeneID" id="394349"/>
<dbReference type="KEGG" id="xla:394349"/>
<dbReference type="AGR" id="Xenbase:XB-GENE-6254442"/>
<dbReference type="CTD" id="394349"/>
<dbReference type="Xenbase" id="XB-GENE-6254442">
    <property type="gene designation" value="mt4.L"/>
</dbReference>
<dbReference type="Proteomes" id="UP000186698">
    <property type="component" value="Chromosome 4L"/>
</dbReference>
<dbReference type="Bgee" id="394349">
    <property type="expression patterns" value="Expressed in brain and 19 other cell types or tissues"/>
</dbReference>
<dbReference type="GO" id="GO:0005737">
    <property type="term" value="C:cytoplasm"/>
    <property type="evidence" value="ECO:0007669"/>
    <property type="project" value="TreeGrafter"/>
</dbReference>
<dbReference type="GO" id="GO:0005634">
    <property type="term" value="C:nucleus"/>
    <property type="evidence" value="ECO:0007669"/>
    <property type="project" value="TreeGrafter"/>
</dbReference>
<dbReference type="GO" id="GO:0046872">
    <property type="term" value="F:metal ion binding"/>
    <property type="evidence" value="ECO:0007669"/>
    <property type="project" value="UniProtKB-KW"/>
</dbReference>
<dbReference type="GO" id="GO:0071276">
    <property type="term" value="P:cellular response to cadmium ion"/>
    <property type="evidence" value="ECO:0007669"/>
    <property type="project" value="TreeGrafter"/>
</dbReference>
<dbReference type="GO" id="GO:0071280">
    <property type="term" value="P:cellular response to copper ion"/>
    <property type="evidence" value="ECO:0007669"/>
    <property type="project" value="TreeGrafter"/>
</dbReference>
<dbReference type="GO" id="GO:0071294">
    <property type="term" value="P:cellular response to zinc ion"/>
    <property type="evidence" value="ECO:0007669"/>
    <property type="project" value="TreeGrafter"/>
</dbReference>
<dbReference type="GO" id="GO:0010273">
    <property type="term" value="P:detoxification of copper ion"/>
    <property type="evidence" value="ECO:0007669"/>
    <property type="project" value="TreeGrafter"/>
</dbReference>
<dbReference type="GO" id="GO:0006882">
    <property type="term" value="P:intracellular zinc ion homeostasis"/>
    <property type="evidence" value="ECO:0007669"/>
    <property type="project" value="TreeGrafter"/>
</dbReference>
<dbReference type="FunFam" id="4.10.10.10:FF:000001">
    <property type="entry name" value="Metallothionein"/>
    <property type="match status" value="1"/>
</dbReference>
<dbReference type="Gene3D" id="4.10.10.10">
    <property type="entry name" value="Metallothionein Isoform II"/>
    <property type="match status" value="1"/>
</dbReference>
<dbReference type="InterPro" id="IPR017854">
    <property type="entry name" value="Metalthion_dom_sf"/>
</dbReference>
<dbReference type="InterPro" id="IPR023587">
    <property type="entry name" value="Metalthion_dom_sf_vert"/>
</dbReference>
<dbReference type="InterPro" id="IPR000006">
    <property type="entry name" value="Metalthion_vert"/>
</dbReference>
<dbReference type="InterPro" id="IPR018064">
    <property type="entry name" value="Metalthion_vert_metal_BS"/>
</dbReference>
<dbReference type="PANTHER" id="PTHR23299">
    <property type="entry name" value="METALLOTHIONEIN"/>
    <property type="match status" value="1"/>
</dbReference>
<dbReference type="PANTHER" id="PTHR23299:SF24">
    <property type="entry name" value="METALLOTHIONEIN-1X"/>
    <property type="match status" value="1"/>
</dbReference>
<dbReference type="Pfam" id="PF00131">
    <property type="entry name" value="Metallothio"/>
    <property type="match status" value="1"/>
</dbReference>
<dbReference type="PRINTS" id="PR00860">
    <property type="entry name" value="MTVERTEBRATE"/>
</dbReference>
<dbReference type="SUPFAM" id="SSF57868">
    <property type="entry name" value="Metallothionein"/>
    <property type="match status" value="1"/>
</dbReference>
<dbReference type="PROSITE" id="PS00203">
    <property type="entry name" value="METALLOTHIONEIN_VRT"/>
    <property type="match status" value="1"/>
</dbReference>
<keyword id="KW-0007">Acetylation</keyword>
<keyword id="KW-0903">Direct protein sequencing</keyword>
<keyword id="KW-0479">Metal-binding</keyword>
<keyword id="KW-0480">Metal-thiolate cluster</keyword>
<keyword id="KW-1185">Reference proteome</keyword>
<name>MT_XENLA</name>
<protein>
    <recommendedName>
        <fullName>Metallothionein</fullName>
        <shortName>MT</shortName>
    </recommendedName>
    <alternativeName>
        <fullName>XlMT-A</fullName>
    </alternativeName>
</protein>
<comment type="function">
    <text>Metallothioneins have a high content of cysteine residues that bind various heavy metals.</text>
</comment>
<comment type="domain">
    <text>Class I metallothioneins contain 2 metal-binding domains: four divalent ions are chelated within cluster A of the alpha domain and are coordinated via cysteinyl thiolate bridges to 11 cysteine ligands. Cluster B, the corresponding region within the beta domain, can ligate three divalent ions to 9 cysteines.</text>
</comment>
<comment type="similarity">
    <text evidence="3">Belongs to the metallothionein superfamily. Type 1 family.</text>
</comment>
<proteinExistence type="evidence at protein level"/>
<reference key="1">
    <citation type="journal article" date="1993" name="DNA Cell Biol.">
        <title>Cloning and nucleotide sequence of a complementary DNA encoding Xenopus laevis metallothionein: mRNA accumulation in response to heavy metals.</title>
        <authorList>
            <person name="St Jacques E."/>
            <person name="Seguin C."/>
        </authorList>
    </citation>
    <scope>NUCLEOTIDE SEQUENCE [MRNA]</scope>
    <source>
        <tissue>Liver</tissue>
    </source>
</reference>
<reference key="2">
    <citation type="journal article" date="1993" name="DNA Cell Biol.">
        <title>Molecular cloning and expression of a metallothionein mRNA in Xenopus laevis.</title>
        <authorList>
            <person name="Muller J.-P."/>
            <person name="Wouters-Tyrou D."/>
            <person name="Erraiss N.-E."/>
            <person name="Vedel M."/>
            <person name="Touzet N."/>
            <person name="Mesnard J."/>
            <person name="Sautiere P."/>
            <person name="Wegnez M."/>
        </authorList>
    </citation>
    <scope>NUCLEOTIDE SEQUENCE [MRNA]</scope>
    <scope>PARTIAL PROTEIN SEQUENCE</scope>
    <scope>ACETYLATION AT MET-1</scope>
</reference>
<reference key="3">
    <citation type="journal article" date="1995" name="Gene">
        <title>Structure and metal-regulated expression of the gene encoding Xenopus laevis metallothionein-A.</title>
        <authorList>
            <person name="St Jacques E."/>
            <person name="April M.J."/>
            <person name="Seguin C."/>
        </authorList>
    </citation>
    <scope>NUCLEOTIDE SEQUENCE [GENOMIC DNA]</scope>
</reference>
<reference key="4">
    <citation type="submission" date="2005-03" db="EMBL/GenBank/DDBJ databases">
        <authorList>
            <consortium name="NIH - Xenopus Gene Collection (XGC) project"/>
        </authorList>
    </citation>
    <scope>NUCLEOTIDE SEQUENCE [LARGE SCALE MRNA]</scope>
    <source>
        <tissue>Kidney</tissue>
    </source>
</reference>